<evidence type="ECO:0000250" key="1">
    <source>
        <dbReference type="UniProtKB" id="P01721"/>
    </source>
</evidence>
<evidence type="ECO:0000255" key="2"/>
<evidence type="ECO:0000255" key="3">
    <source>
        <dbReference type="PROSITE-ProRule" id="PRU00114"/>
    </source>
</evidence>
<evidence type="ECO:0000303" key="4">
    <source>
    </source>
</evidence>
<evidence type="ECO:0000303" key="5">
    <source>
    </source>
</evidence>
<evidence type="ECO:0000303" key="6">
    <source>
    </source>
</evidence>
<evidence type="ECO:0000303" key="7">
    <source>
    </source>
</evidence>
<evidence type="ECO:0000303" key="8">
    <source>
    </source>
</evidence>
<evidence type="ECO:0000303" key="9">
    <source ref="3"/>
</evidence>
<evidence type="ECO:0000305" key="10"/>
<evidence type="ECO:0007744" key="11">
    <source>
    </source>
</evidence>
<organism>
    <name type="scientific">Homo sapiens</name>
    <name type="common">Human</name>
    <dbReference type="NCBI Taxonomy" id="9606"/>
    <lineage>
        <taxon>Eukaryota</taxon>
        <taxon>Metazoa</taxon>
        <taxon>Chordata</taxon>
        <taxon>Craniata</taxon>
        <taxon>Vertebrata</taxon>
        <taxon>Euteleostomi</taxon>
        <taxon>Mammalia</taxon>
        <taxon>Eutheria</taxon>
        <taxon>Euarchontoglires</taxon>
        <taxon>Primates</taxon>
        <taxon>Haplorrhini</taxon>
        <taxon>Catarrhini</taxon>
        <taxon>Hominidae</taxon>
        <taxon>Homo</taxon>
    </lineage>
</organism>
<sequence length="123" mass="13024">MAWAPLLLTLLSLLTGSLSQPVLTQPPSASASLGASVTLTCTLSSGYSNYKVDWYQQRPGKGPRFVMRVGTGGIVGSKGDGIPDRFSVLGSGLNRYLTIKNIQEEDESDYHCGADHGSGSNFV</sequence>
<feature type="signal peptide" evidence="2">
    <location>
        <begin position="1"/>
        <end position="19"/>
    </location>
</feature>
<feature type="chain" id="PRO_5002091820" description="Immunoglobulin lambda variable 9-49" evidence="2">
    <location>
        <begin position="20"/>
        <end position="123"/>
    </location>
</feature>
<feature type="domain" description="Ig-like" evidence="3">
    <location>
        <begin position="21"/>
        <end position="123" status="greater than"/>
    </location>
</feature>
<feature type="region of interest" description="Framework-1" evidence="1">
    <location>
        <begin position="20"/>
        <end position="44"/>
    </location>
</feature>
<feature type="region of interest" description="Complementarity-determining-1" evidence="1">
    <location>
        <begin position="45"/>
        <end position="51"/>
    </location>
</feature>
<feature type="region of interest" description="Framework-2" evidence="1">
    <location>
        <begin position="52"/>
        <end position="68"/>
    </location>
</feature>
<feature type="region of interest" description="Complementarity-determining-2" evidence="1">
    <location>
        <begin position="69"/>
        <end position="76"/>
    </location>
</feature>
<feature type="region of interest" description="Framework-3" evidence="1">
    <location>
        <begin position="77"/>
        <end position="112"/>
    </location>
</feature>
<feature type="region of interest" description="Complementarity-determining-3" evidence="1">
    <location>
        <begin position="113"/>
        <end position="123" status="greater than"/>
    </location>
</feature>
<feature type="modified residue" description="Phosphotyrosine" evidence="11">
    <location>
        <position position="96"/>
    </location>
</feature>
<feature type="modified residue" description="Phosphothreonine" evidence="11">
    <location>
        <position position="98"/>
    </location>
</feature>
<feature type="disulfide bond" evidence="3">
    <location>
        <begin position="41"/>
        <end position="112"/>
    </location>
</feature>
<feature type="non-terminal residue">
    <location>
        <position position="123"/>
    </location>
</feature>
<protein>
    <recommendedName>
        <fullName evidence="4 9">Immunoglobulin lambda variable 9-49</fullName>
    </recommendedName>
</protein>
<comment type="function">
    <text evidence="5 6 7 8">V region of the variable domain of immunoglobulin light chains that participates in the antigen recognition (PubMed:24600447). Immunoglobulins, also known as antibodies, are membrane-bound or secreted glycoproteins produced by B lymphocytes. In the recognition phase of humoral immunity, the membrane-bound immunoglobulins serve as receptors which, upon binding of a specific antigen, trigger the clonal expansion and differentiation of B lymphocytes into immunoglobulins-secreting plasma cells. Secreted immunoglobulins mediate the effector phase of humoral immunity, which results in the elimination of bound antigens (PubMed:20176268, PubMed:22158414). The antigen binding site is formed by the variable domain of one heavy chain, together with that of its associated light chain. Thus, each immunoglobulin has two antigen binding sites with remarkable affinity for a particular antigen. The variable domains are assembled by a process called V-(D)-J rearrangement and can then be subjected to somatic hypermutations which, after exposure to antigen and selection, allow affinity maturation for a particular antigen (PubMed:17576170, PubMed:20176268).</text>
</comment>
<comment type="subunit">
    <text evidence="6">Immunoglobulins are composed of two identical heavy chains and two identical light chains; disulfide-linked.</text>
</comment>
<comment type="subcellular location">
    <subcellularLocation>
        <location evidence="6 7">Secreted</location>
    </subcellularLocation>
    <subcellularLocation>
        <location evidence="6 7">Cell membrane</location>
    </subcellularLocation>
</comment>
<comment type="polymorphism">
    <text>There are several alleles. The sequence shown is that of IMGT allele IGLV9-49*01.</text>
</comment>
<comment type="caution">
    <text evidence="10">For an example of a full-length immunoglobulin lambda light chain see AC P0DOX8.</text>
</comment>
<proteinExistence type="evidence at protein level"/>
<accession>A0A0B4J1Y8</accession>
<dbReference type="EMBL" id="AC245060">
    <property type="status" value="NOT_ANNOTATED_CDS"/>
    <property type="molecule type" value="Genomic_DNA"/>
</dbReference>
<dbReference type="SMR" id="A0A0B4J1Y8"/>
<dbReference type="FunCoup" id="A0A0B4J1Y8">
    <property type="interactions" value="225"/>
</dbReference>
<dbReference type="IMGT_GENE-DB" id="IGLV9-49"/>
<dbReference type="iPTMnet" id="A0A0B4J1Y8"/>
<dbReference type="BioMuta" id="IGLV9-49"/>
<dbReference type="MassIVE" id="A0A0B4J1Y8"/>
<dbReference type="Ensembl" id="ENST00000427632.2">
    <property type="protein sequence ID" value="ENSP00000414456.2"/>
    <property type="gene ID" value="ENSG00000223350.2"/>
</dbReference>
<dbReference type="AGR" id="HGNC:5933"/>
<dbReference type="GeneCards" id="IGLV9-49"/>
<dbReference type="HGNC" id="HGNC:5933">
    <property type="gene designation" value="IGLV9-49"/>
</dbReference>
<dbReference type="HPA" id="ENSG00000223350">
    <property type="expression patterns" value="Tissue enhanced (adrenal gland, lymphoid tissue)"/>
</dbReference>
<dbReference type="neXtProt" id="NX_A0A0B4J1Y8"/>
<dbReference type="OpenTargets" id="ENSG00000223350"/>
<dbReference type="VEuPathDB" id="HostDB:ENSG00000223350"/>
<dbReference type="GeneTree" id="ENSGT00940000153934"/>
<dbReference type="HOGENOM" id="CLU_077975_4_0_1"/>
<dbReference type="InParanoid" id="A0A0B4J1Y8"/>
<dbReference type="OMA" id="DYYCGSD"/>
<dbReference type="OrthoDB" id="9838202at2759"/>
<dbReference type="PAN-GO" id="A0A0B4J1Y8">
    <property type="GO annotations" value="3 GO annotations based on evolutionary models"/>
</dbReference>
<dbReference type="PhylomeDB" id="A0A0B4J1Y8"/>
<dbReference type="SignaLink" id="A0A0B4J1Y8"/>
<dbReference type="Pharos" id="A0A0B4J1Y8">
    <property type="development level" value="Tdark"/>
</dbReference>
<dbReference type="PRO" id="PR:A0A0B4J1Y8"/>
<dbReference type="Proteomes" id="UP000005640">
    <property type="component" value="Chromosome 22"/>
</dbReference>
<dbReference type="RNAct" id="A0A0B4J1Y8">
    <property type="molecule type" value="protein"/>
</dbReference>
<dbReference type="Bgee" id="ENSG00000223350">
    <property type="expression patterns" value="Expressed in spleen and 98 other cell types or tissues"/>
</dbReference>
<dbReference type="GO" id="GO:0005576">
    <property type="term" value="C:extracellular region"/>
    <property type="evidence" value="ECO:0007669"/>
    <property type="project" value="UniProtKB-SubCell"/>
</dbReference>
<dbReference type="GO" id="GO:0019814">
    <property type="term" value="C:immunoglobulin complex"/>
    <property type="evidence" value="ECO:0000318"/>
    <property type="project" value="GO_Central"/>
</dbReference>
<dbReference type="GO" id="GO:0005886">
    <property type="term" value="C:plasma membrane"/>
    <property type="evidence" value="ECO:0007669"/>
    <property type="project" value="UniProtKB-SubCell"/>
</dbReference>
<dbReference type="GO" id="GO:0002250">
    <property type="term" value="P:adaptive immune response"/>
    <property type="evidence" value="ECO:0007669"/>
    <property type="project" value="UniProtKB-KW"/>
</dbReference>
<dbReference type="GO" id="GO:0006955">
    <property type="term" value="P:immune response"/>
    <property type="evidence" value="ECO:0000318"/>
    <property type="project" value="GO_Central"/>
</dbReference>
<dbReference type="FunFam" id="2.60.40.10:FF:001181">
    <property type="entry name" value="Immunoglobulin lambda variable 9-49"/>
    <property type="match status" value="1"/>
</dbReference>
<dbReference type="Gene3D" id="2.60.40.10">
    <property type="entry name" value="Immunoglobulins"/>
    <property type="match status" value="1"/>
</dbReference>
<dbReference type="InterPro" id="IPR007110">
    <property type="entry name" value="Ig-like_dom"/>
</dbReference>
<dbReference type="InterPro" id="IPR036179">
    <property type="entry name" value="Ig-like_dom_sf"/>
</dbReference>
<dbReference type="InterPro" id="IPR013783">
    <property type="entry name" value="Ig-like_fold"/>
</dbReference>
<dbReference type="InterPro" id="IPR003599">
    <property type="entry name" value="Ig_sub"/>
</dbReference>
<dbReference type="InterPro" id="IPR003598">
    <property type="entry name" value="Ig_sub2"/>
</dbReference>
<dbReference type="InterPro" id="IPR013106">
    <property type="entry name" value="Ig_V-set"/>
</dbReference>
<dbReference type="InterPro" id="IPR050150">
    <property type="entry name" value="IgV_Light_Chain"/>
</dbReference>
<dbReference type="PANTHER" id="PTHR23267">
    <property type="entry name" value="IMMUNOGLOBULIN LIGHT CHAIN"/>
    <property type="match status" value="1"/>
</dbReference>
<dbReference type="Pfam" id="PF07686">
    <property type="entry name" value="V-set"/>
    <property type="match status" value="1"/>
</dbReference>
<dbReference type="SMART" id="SM00409">
    <property type="entry name" value="IG"/>
    <property type="match status" value="1"/>
</dbReference>
<dbReference type="SMART" id="SM00408">
    <property type="entry name" value="IGc2"/>
    <property type="match status" value="1"/>
</dbReference>
<dbReference type="SMART" id="SM00406">
    <property type="entry name" value="IGv"/>
    <property type="match status" value="1"/>
</dbReference>
<dbReference type="SUPFAM" id="SSF48726">
    <property type="entry name" value="Immunoglobulin"/>
    <property type="match status" value="1"/>
</dbReference>
<dbReference type="PROSITE" id="PS50835">
    <property type="entry name" value="IG_LIKE"/>
    <property type="match status" value="1"/>
</dbReference>
<gene>
    <name evidence="4 9" type="primary">IGLV9-49</name>
</gene>
<name>LV949_HUMAN</name>
<keyword id="KW-1064">Adaptive immunity</keyword>
<keyword id="KW-1003">Cell membrane</keyword>
<keyword id="KW-1015">Disulfide bond</keyword>
<keyword id="KW-0391">Immunity</keyword>
<keyword id="KW-1280">Immunoglobulin</keyword>
<keyword id="KW-0393">Immunoglobulin domain</keyword>
<keyword id="KW-0472">Membrane</keyword>
<keyword id="KW-0597">Phosphoprotein</keyword>
<keyword id="KW-1267">Proteomics identification</keyword>
<keyword id="KW-1185">Reference proteome</keyword>
<keyword id="KW-0964">Secreted</keyword>
<keyword id="KW-0732">Signal</keyword>
<reference key="1">
    <citation type="journal article" date="1999" name="Nature">
        <title>The DNA sequence of human chromosome 22.</title>
        <authorList>
            <person name="Dunham I."/>
            <person name="Hunt A.R."/>
            <person name="Collins J.E."/>
            <person name="Bruskiewich R."/>
            <person name="Beare D.M."/>
            <person name="Clamp M."/>
            <person name="Smink L.J."/>
            <person name="Ainscough R."/>
            <person name="Almeida J.P."/>
            <person name="Babbage A.K."/>
            <person name="Bagguley C."/>
            <person name="Bailey J."/>
            <person name="Barlow K.F."/>
            <person name="Bates K.N."/>
            <person name="Beasley O.P."/>
            <person name="Bird C.P."/>
            <person name="Blakey S.E."/>
            <person name="Bridgeman A.M."/>
            <person name="Buck D."/>
            <person name="Burgess J."/>
            <person name="Burrill W.D."/>
            <person name="Burton J."/>
            <person name="Carder C."/>
            <person name="Carter N.P."/>
            <person name="Chen Y."/>
            <person name="Clark G."/>
            <person name="Clegg S.M."/>
            <person name="Cobley V.E."/>
            <person name="Cole C.G."/>
            <person name="Collier R.E."/>
            <person name="Connor R."/>
            <person name="Conroy D."/>
            <person name="Corby N.R."/>
            <person name="Coville G.J."/>
            <person name="Cox A.V."/>
            <person name="Davis J."/>
            <person name="Dawson E."/>
            <person name="Dhami P.D."/>
            <person name="Dockree C."/>
            <person name="Dodsworth S.J."/>
            <person name="Durbin R.M."/>
            <person name="Ellington A.G."/>
            <person name="Evans K.L."/>
            <person name="Fey J.M."/>
            <person name="Fleming K."/>
            <person name="French L."/>
            <person name="Garner A.A."/>
            <person name="Gilbert J.G.R."/>
            <person name="Goward M.E."/>
            <person name="Grafham D.V."/>
            <person name="Griffiths M.N.D."/>
            <person name="Hall C."/>
            <person name="Hall R.E."/>
            <person name="Hall-Tamlyn G."/>
            <person name="Heathcott R.W."/>
            <person name="Ho S."/>
            <person name="Holmes S."/>
            <person name="Hunt S.E."/>
            <person name="Jones M.C."/>
            <person name="Kershaw J."/>
            <person name="Kimberley A.M."/>
            <person name="King A."/>
            <person name="Laird G.K."/>
            <person name="Langford C.F."/>
            <person name="Leversha M.A."/>
            <person name="Lloyd C."/>
            <person name="Lloyd D.M."/>
            <person name="Martyn I.D."/>
            <person name="Mashreghi-Mohammadi M."/>
            <person name="Matthews L.H."/>
            <person name="Mccann O.T."/>
            <person name="Mcclay J."/>
            <person name="Mclaren S."/>
            <person name="McMurray A.A."/>
            <person name="Milne S.A."/>
            <person name="Mortimore B.J."/>
            <person name="Odell C.N."/>
            <person name="Pavitt R."/>
            <person name="Pearce A.V."/>
            <person name="Pearson D."/>
            <person name="Phillimore B.J.C.T."/>
            <person name="Phillips S.H."/>
            <person name="Plumb R.W."/>
            <person name="Ramsay H."/>
            <person name="Ramsey Y."/>
            <person name="Rogers L."/>
            <person name="Ross M.T."/>
            <person name="Scott C.E."/>
            <person name="Sehra H.K."/>
            <person name="Skuce C.D."/>
            <person name="Smalley S."/>
            <person name="Smith M.L."/>
            <person name="Soderlund C."/>
            <person name="Spragon L."/>
            <person name="Steward C.A."/>
            <person name="Sulston J.E."/>
            <person name="Swann R.M."/>
            <person name="Vaudin M."/>
            <person name="Wall M."/>
            <person name="Wallis J.M."/>
            <person name="Whiteley M.N."/>
            <person name="Willey D.L."/>
            <person name="Williams L."/>
            <person name="Williams S.A."/>
            <person name="Williamson H."/>
            <person name="Wilmer T.E."/>
            <person name="Wilming L."/>
            <person name="Wright C.L."/>
            <person name="Hubbard T."/>
            <person name="Bentley D.R."/>
            <person name="Beck S."/>
            <person name="Rogers J."/>
            <person name="Shimizu N."/>
            <person name="Minoshima S."/>
            <person name="Kawasaki K."/>
            <person name="Sasaki T."/>
            <person name="Asakawa S."/>
            <person name="Kudoh J."/>
            <person name="Shintani A."/>
            <person name="Shibuya K."/>
            <person name="Yoshizaki Y."/>
            <person name="Aoki N."/>
            <person name="Mitsuyama S."/>
            <person name="Roe B.A."/>
            <person name="Chen F."/>
            <person name="Chu L."/>
            <person name="Crabtree J."/>
            <person name="Deschamps S."/>
            <person name="Do A."/>
            <person name="Do T."/>
            <person name="Dorman A."/>
            <person name="Fang F."/>
            <person name="Fu Y."/>
            <person name="Hu P."/>
            <person name="Hua A."/>
            <person name="Kenton S."/>
            <person name="Lai H."/>
            <person name="Lao H.I."/>
            <person name="Lewis J."/>
            <person name="Lewis S."/>
            <person name="Lin S.-P."/>
            <person name="Loh P."/>
            <person name="Malaj E."/>
            <person name="Nguyen T."/>
            <person name="Pan H."/>
            <person name="Phan S."/>
            <person name="Qi S."/>
            <person name="Qian Y."/>
            <person name="Ray L."/>
            <person name="Ren Q."/>
            <person name="Shaull S."/>
            <person name="Sloan D."/>
            <person name="Song L."/>
            <person name="Wang Q."/>
            <person name="Wang Y."/>
            <person name="Wang Z."/>
            <person name="White J."/>
            <person name="Willingham D."/>
            <person name="Wu H."/>
            <person name="Yao Z."/>
            <person name="Zhan M."/>
            <person name="Zhang G."/>
            <person name="Chissoe S."/>
            <person name="Murray J."/>
            <person name="Miller N."/>
            <person name="Minx P."/>
            <person name="Fulton R."/>
            <person name="Johnson D."/>
            <person name="Bemis G."/>
            <person name="Bentley D."/>
            <person name="Bradshaw H."/>
            <person name="Bourne S."/>
            <person name="Cordes M."/>
            <person name="Du Z."/>
            <person name="Fulton L."/>
            <person name="Goela D."/>
            <person name="Graves T."/>
            <person name="Hawkins J."/>
            <person name="Hinds K."/>
            <person name="Kemp K."/>
            <person name="Latreille P."/>
            <person name="Layman D."/>
            <person name="Ozersky P."/>
            <person name="Rohlfing T."/>
            <person name="Scheet P."/>
            <person name="Walker C."/>
            <person name="Wamsley A."/>
            <person name="Wohldmann P."/>
            <person name="Pepin K."/>
            <person name="Nelson J."/>
            <person name="Korf I."/>
            <person name="Bedell J.A."/>
            <person name="Hillier L.W."/>
            <person name="Mardis E."/>
            <person name="Waterston R."/>
            <person name="Wilson R."/>
            <person name="Emanuel B.S."/>
            <person name="Shaikh T."/>
            <person name="Kurahashi H."/>
            <person name="Saitta S."/>
            <person name="Budarf M.L."/>
            <person name="McDermid H.E."/>
            <person name="Johnson A."/>
            <person name="Wong A.C.C."/>
            <person name="Morrow B.E."/>
            <person name="Edelmann L."/>
            <person name="Kim U.J."/>
            <person name="Shizuya H."/>
            <person name="Simon M.I."/>
            <person name="Dumanski J.P."/>
            <person name="Peyrard M."/>
            <person name="Kedra D."/>
            <person name="Seroussi E."/>
            <person name="Fransson I."/>
            <person name="Tapia I."/>
            <person name="Bruder C.E."/>
            <person name="O'Brien K.P."/>
            <person name="Wilkinson P."/>
            <person name="Bodenteich A."/>
            <person name="Hartman K."/>
            <person name="Hu X."/>
            <person name="Khan A.S."/>
            <person name="Lane L."/>
            <person name="Tilahun Y."/>
            <person name="Wright H."/>
        </authorList>
    </citation>
    <scope>NUCLEOTIDE SEQUENCE [LARGE SCALE GENOMIC DNA] (IMGT ALLELE IGLV9-49*01)</scope>
</reference>
<reference key="2">
    <citation type="journal article" date="2001" name="Exp. Clin. Immunogenet.">
        <title>Nomenclature of the human immunoglobulin lambda (IGL) genes.</title>
        <authorList>
            <person name="Lefranc M.P."/>
        </authorList>
    </citation>
    <scope>NOMENCLATURE</scope>
</reference>
<reference key="3">
    <citation type="book" date="2001" name="The Immunoglobulin FactsBook.">
        <title>The Immunoglobulin FactsBook.</title>
        <editorList>
            <person name="Lefranc M.P."/>
            <person name="Lefranc G."/>
        </editorList>
        <authorList>
            <person name="Lefranc M.P."/>
            <person name="Lefranc G."/>
        </authorList>
    </citation>
    <scope>NOMENCLATURE</scope>
</reference>
<reference key="4">
    <citation type="journal article" date="2007" name="Annu. Rev. Genet.">
        <title>Immunoglobulin somatic hypermutation.</title>
        <authorList>
            <person name="Teng G."/>
            <person name="Papavasiliou F.N."/>
        </authorList>
    </citation>
    <scope>REVIEW ON SOMATIC HYPERMUTATION</scope>
</reference>
<reference key="5">
    <citation type="journal article" date="2008" name="Proc. Natl. Acad. Sci. U.S.A.">
        <title>A quantitative atlas of mitotic phosphorylation.</title>
        <authorList>
            <person name="Dephoure N."/>
            <person name="Zhou C."/>
            <person name="Villen J."/>
            <person name="Beausoleil S.A."/>
            <person name="Bakalarski C.E."/>
            <person name="Elledge S.J."/>
            <person name="Gygi S.P."/>
        </authorList>
    </citation>
    <scope>PHOSPHORYLATION [LARGE SCALE ANALYSIS] AT TYR-96 AND THR-98</scope>
    <scope>IDENTIFICATION BY MASS SPECTROMETRY [LARGE SCALE ANALYSIS]</scope>
    <source>
        <tissue>Cervix carcinoma</tissue>
    </source>
</reference>
<reference key="6">
    <citation type="journal article" date="2010" name="J. Allergy Clin. Immunol.">
        <title>Structure and function of immunoglobulins.</title>
        <authorList>
            <person name="Schroeder H.W. Jr."/>
            <person name="Cavacini L."/>
        </authorList>
    </citation>
    <scope>REVIEW ON IMMUNOGLOBULINS</scope>
</reference>
<reference key="7">
    <citation type="journal article" date="2012" name="Nat. Rev. Immunol.">
        <title>Molecular programming of B cell memory.</title>
        <authorList>
            <person name="McHeyzer-Williams M."/>
            <person name="Okitsu S."/>
            <person name="Wang N."/>
            <person name="McHeyzer-Williams L."/>
        </authorList>
    </citation>
    <scope>REVIEW ON FUNCTION</scope>
</reference>
<reference key="8">
    <citation type="journal article" date="2014" name="Front. Immunol.">
        <title>Immunoglobulin and T Cell Receptor Genes: IMGT((R)) and the Birth and Rise of Immunoinformatics.</title>
        <authorList>
            <person name="Lefranc M.P."/>
        </authorList>
    </citation>
    <scope>NOMENCLATURE</scope>
</reference>